<gene>
    <name type="primary">metG</name>
    <name type="ordered locus">M6_Spy0370</name>
</gene>
<name>SYM_STRP6</name>
<sequence>MKKPFYITTPIYYPSGKLHIGSAYTTIACDVLARYKRLMGHEVFYLTGLDEHGQKIQTKAKEAGITPQTYVDNMAKDVKALWQLLDISYDTFIRTTDDYHEEVVAAVFEKLLAQDDIYLGEYSGWYSVSDEEFFTESQLKEVFRDEDGQVIGGIAPSGHEVEWVSEESYFLRLSKYADRLVAFFKERPDFIQPDGRMNEMVKNFIEPGLEDLAVSRTTFTWGVPVPSDPKHVVYVWIDALLNYATALGYGQANHANFDKFWNGTVFHMVGKDILRFHSIYWPILLMMLDLPMPDRLIAHGWFVMKDGKMSKSKGNVVYPEMLVERFGLDPLRYYLMRSLPVGSDGTFTPEDYVGRINYELANDLGNLLNRTVAMINKYFDGTVPAYVDNGTAFDADLSQLIDAQLADYHKHMEAVDYPRALEAVWTIIARTNKYIDETAPWVLAKEDGDKAQLASVMAHLAASLRVVAHVIQPFMMETSAAIMAQLGLAPVSDLSTLALADFPANTKVVAKGTPIFPRLDMEAEIDYIKAQMGDSSAISQEKEWVPEEVALKSEKDVITFETFDAVEIRVAEVKEVSKVEGSEKLLRFRVDAGDGQDRQILSGIAKCYPNEQELVGKKLQIVANLKPRKMMKQYISQGMILSAEHGDQLTVLTVDPSVPNGSIIG</sequence>
<organism>
    <name type="scientific">Streptococcus pyogenes serotype M6 (strain ATCC BAA-946 / MGAS10394)</name>
    <dbReference type="NCBI Taxonomy" id="286636"/>
    <lineage>
        <taxon>Bacteria</taxon>
        <taxon>Bacillati</taxon>
        <taxon>Bacillota</taxon>
        <taxon>Bacilli</taxon>
        <taxon>Lactobacillales</taxon>
        <taxon>Streptococcaceae</taxon>
        <taxon>Streptococcus</taxon>
    </lineage>
</organism>
<feature type="chain" id="PRO_0000139254" description="Methionine--tRNA ligase">
    <location>
        <begin position="1"/>
        <end position="665"/>
    </location>
</feature>
<feature type="domain" description="tRNA-binding">
    <location>
        <begin position="562"/>
        <end position="665"/>
    </location>
</feature>
<feature type="short sequence motif" description="'HIGH' region">
    <location>
        <begin position="12"/>
        <end position="22"/>
    </location>
</feature>
<feature type="short sequence motif" description="'KMSKS' region">
    <location>
        <begin position="308"/>
        <end position="312"/>
    </location>
</feature>
<feature type="binding site" evidence="1">
    <location>
        <position position="311"/>
    </location>
    <ligand>
        <name>ATP</name>
        <dbReference type="ChEBI" id="CHEBI:30616"/>
    </ligand>
</feature>
<proteinExistence type="inferred from homology"/>
<evidence type="ECO:0000250" key="1"/>
<evidence type="ECO:0000305" key="2"/>
<reference key="1">
    <citation type="journal article" date="2004" name="J. Infect. Dis.">
        <title>Progress toward characterization of the group A Streptococcus metagenome: complete genome sequence of a macrolide-resistant serotype M6 strain.</title>
        <authorList>
            <person name="Banks D.J."/>
            <person name="Porcella S.F."/>
            <person name="Barbian K.D."/>
            <person name="Beres S.B."/>
            <person name="Philips L.E."/>
            <person name="Voyich J.M."/>
            <person name="DeLeo F.R."/>
            <person name="Martin J.M."/>
            <person name="Somerville G.A."/>
            <person name="Musser J.M."/>
        </authorList>
    </citation>
    <scope>NUCLEOTIDE SEQUENCE [LARGE SCALE GENOMIC DNA]</scope>
    <source>
        <strain>ATCC BAA-946 / MGAS10394</strain>
    </source>
</reference>
<dbReference type="EC" id="6.1.1.10"/>
<dbReference type="EMBL" id="CP000003">
    <property type="protein sequence ID" value="AAT86505.1"/>
    <property type="status" value="ALT_INIT"/>
    <property type="molecule type" value="Genomic_DNA"/>
</dbReference>
<dbReference type="SMR" id="Q5XDK8"/>
<dbReference type="KEGG" id="spa:M6_Spy0370"/>
<dbReference type="HOGENOM" id="CLU_009710_9_4_9"/>
<dbReference type="Proteomes" id="UP000001167">
    <property type="component" value="Chromosome"/>
</dbReference>
<dbReference type="GO" id="GO:0005737">
    <property type="term" value="C:cytoplasm"/>
    <property type="evidence" value="ECO:0007669"/>
    <property type="project" value="UniProtKB-SubCell"/>
</dbReference>
<dbReference type="GO" id="GO:0005524">
    <property type="term" value="F:ATP binding"/>
    <property type="evidence" value="ECO:0007669"/>
    <property type="project" value="UniProtKB-UniRule"/>
</dbReference>
<dbReference type="GO" id="GO:0004825">
    <property type="term" value="F:methionine-tRNA ligase activity"/>
    <property type="evidence" value="ECO:0007669"/>
    <property type="project" value="UniProtKB-UniRule"/>
</dbReference>
<dbReference type="GO" id="GO:0000049">
    <property type="term" value="F:tRNA binding"/>
    <property type="evidence" value="ECO:0007669"/>
    <property type="project" value="UniProtKB-KW"/>
</dbReference>
<dbReference type="GO" id="GO:0006431">
    <property type="term" value="P:methionyl-tRNA aminoacylation"/>
    <property type="evidence" value="ECO:0007669"/>
    <property type="project" value="UniProtKB-UniRule"/>
</dbReference>
<dbReference type="CDD" id="cd07957">
    <property type="entry name" value="Anticodon_Ia_Met"/>
    <property type="match status" value="1"/>
</dbReference>
<dbReference type="CDD" id="cd00814">
    <property type="entry name" value="MetRS_core"/>
    <property type="match status" value="1"/>
</dbReference>
<dbReference type="CDD" id="cd02800">
    <property type="entry name" value="tRNA_bind_EcMetRS_like"/>
    <property type="match status" value="1"/>
</dbReference>
<dbReference type="FunFam" id="1.10.730.10:FF:000026">
    <property type="entry name" value="Methionine--tRNA ligase"/>
    <property type="match status" value="1"/>
</dbReference>
<dbReference type="FunFam" id="2.170.220.10:FF:000002">
    <property type="entry name" value="Methionine--tRNA ligase"/>
    <property type="match status" value="1"/>
</dbReference>
<dbReference type="FunFam" id="2.40.50.140:FF:000042">
    <property type="entry name" value="Methionine--tRNA ligase"/>
    <property type="match status" value="1"/>
</dbReference>
<dbReference type="Gene3D" id="2.170.220.10">
    <property type="match status" value="1"/>
</dbReference>
<dbReference type="Gene3D" id="3.40.50.620">
    <property type="entry name" value="HUPs"/>
    <property type="match status" value="1"/>
</dbReference>
<dbReference type="Gene3D" id="1.10.730.10">
    <property type="entry name" value="Isoleucyl-tRNA Synthetase, Domain 1"/>
    <property type="match status" value="1"/>
</dbReference>
<dbReference type="Gene3D" id="2.40.50.140">
    <property type="entry name" value="Nucleic acid-binding proteins"/>
    <property type="match status" value="1"/>
</dbReference>
<dbReference type="HAMAP" id="MF_01228">
    <property type="entry name" value="Met_tRNA_synth_type2"/>
    <property type="match status" value="1"/>
</dbReference>
<dbReference type="InterPro" id="IPR041872">
    <property type="entry name" value="Anticodon_Met"/>
</dbReference>
<dbReference type="InterPro" id="IPR004495">
    <property type="entry name" value="Met-tRNA-synth_bsu_C"/>
</dbReference>
<dbReference type="InterPro" id="IPR014758">
    <property type="entry name" value="Met-tRNA_synth"/>
</dbReference>
<dbReference type="InterPro" id="IPR023457">
    <property type="entry name" value="Met-tRNA_synth_2"/>
</dbReference>
<dbReference type="InterPro" id="IPR015413">
    <property type="entry name" value="Methionyl/Leucyl_tRNA_Synth"/>
</dbReference>
<dbReference type="InterPro" id="IPR033911">
    <property type="entry name" value="MetRS_core"/>
</dbReference>
<dbReference type="InterPro" id="IPR012340">
    <property type="entry name" value="NA-bd_OB-fold"/>
</dbReference>
<dbReference type="InterPro" id="IPR014729">
    <property type="entry name" value="Rossmann-like_a/b/a_fold"/>
</dbReference>
<dbReference type="InterPro" id="IPR002547">
    <property type="entry name" value="tRNA-bd_dom"/>
</dbReference>
<dbReference type="InterPro" id="IPR009080">
    <property type="entry name" value="tRNAsynth_Ia_anticodon-bd"/>
</dbReference>
<dbReference type="NCBIfam" id="TIGR00398">
    <property type="entry name" value="metG"/>
    <property type="match status" value="1"/>
</dbReference>
<dbReference type="NCBIfam" id="TIGR00399">
    <property type="entry name" value="metG_C_term"/>
    <property type="match status" value="1"/>
</dbReference>
<dbReference type="NCBIfam" id="NF008900">
    <property type="entry name" value="PRK12267.1"/>
    <property type="match status" value="1"/>
</dbReference>
<dbReference type="PANTHER" id="PTHR43326:SF1">
    <property type="entry name" value="METHIONINE--TRNA LIGASE, MITOCHONDRIAL"/>
    <property type="match status" value="1"/>
</dbReference>
<dbReference type="PANTHER" id="PTHR43326">
    <property type="entry name" value="METHIONYL-TRNA SYNTHETASE"/>
    <property type="match status" value="1"/>
</dbReference>
<dbReference type="Pfam" id="PF19303">
    <property type="entry name" value="Anticodon_3"/>
    <property type="match status" value="1"/>
</dbReference>
<dbReference type="Pfam" id="PF09334">
    <property type="entry name" value="tRNA-synt_1g"/>
    <property type="match status" value="1"/>
</dbReference>
<dbReference type="Pfam" id="PF01588">
    <property type="entry name" value="tRNA_bind"/>
    <property type="match status" value="1"/>
</dbReference>
<dbReference type="PRINTS" id="PR01041">
    <property type="entry name" value="TRNASYNTHMET"/>
</dbReference>
<dbReference type="SUPFAM" id="SSF47323">
    <property type="entry name" value="Anticodon-binding domain of a subclass of class I aminoacyl-tRNA synthetases"/>
    <property type="match status" value="1"/>
</dbReference>
<dbReference type="SUPFAM" id="SSF50249">
    <property type="entry name" value="Nucleic acid-binding proteins"/>
    <property type="match status" value="1"/>
</dbReference>
<dbReference type="SUPFAM" id="SSF52374">
    <property type="entry name" value="Nucleotidylyl transferase"/>
    <property type="match status" value="1"/>
</dbReference>
<dbReference type="PROSITE" id="PS50886">
    <property type="entry name" value="TRBD"/>
    <property type="match status" value="1"/>
</dbReference>
<keyword id="KW-0030">Aminoacyl-tRNA synthetase</keyword>
<keyword id="KW-0067">ATP-binding</keyword>
<keyword id="KW-0963">Cytoplasm</keyword>
<keyword id="KW-0436">Ligase</keyword>
<keyword id="KW-0547">Nucleotide-binding</keyword>
<keyword id="KW-0648">Protein biosynthesis</keyword>
<keyword id="KW-0694">RNA-binding</keyword>
<keyword id="KW-0820">tRNA-binding</keyword>
<comment type="function">
    <text evidence="1">Is required not only for elongation of protein synthesis but also for the initiation of all mRNA translation through initiator tRNA(fMet) aminoacylation.</text>
</comment>
<comment type="catalytic activity">
    <reaction>
        <text>tRNA(Met) + L-methionine + ATP = L-methionyl-tRNA(Met) + AMP + diphosphate</text>
        <dbReference type="Rhea" id="RHEA:13481"/>
        <dbReference type="Rhea" id="RHEA-COMP:9667"/>
        <dbReference type="Rhea" id="RHEA-COMP:9698"/>
        <dbReference type="ChEBI" id="CHEBI:30616"/>
        <dbReference type="ChEBI" id="CHEBI:33019"/>
        <dbReference type="ChEBI" id="CHEBI:57844"/>
        <dbReference type="ChEBI" id="CHEBI:78442"/>
        <dbReference type="ChEBI" id="CHEBI:78530"/>
        <dbReference type="ChEBI" id="CHEBI:456215"/>
        <dbReference type="EC" id="6.1.1.10"/>
    </reaction>
</comment>
<comment type="subunit">
    <text evidence="1">Homodimer.</text>
</comment>
<comment type="subcellular location">
    <subcellularLocation>
        <location evidence="1">Cytoplasm</location>
    </subcellularLocation>
</comment>
<comment type="similarity">
    <text evidence="2">Belongs to the class-I aminoacyl-tRNA synthetase family. MetG type 2B subfamily.</text>
</comment>
<comment type="sequence caution" evidence="2">
    <conflict type="erroneous initiation">
        <sequence resource="EMBL-CDS" id="AAT86505"/>
    </conflict>
</comment>
<protein>
    <recommendedName>
        <fullName>Methionine--tRNA ligase</fullName>
        <ecNumber>6.1.1.10</ecNumber>
    </recommendedName>
    <alternativeName>
        <fullName>Methionyl-tRNA synthetase</fullName>
        <shortName>MetRS</shortName>
    </alternativeName>
</protein>
<accession>Q5XDK8</accession>